<reference key="1">
    <citation type="journal article" date="2004" name="Science">
        <title>The 1.2-megabase genome sequence of Mimivirus.</title>
        <authorList>
            <person name="Raoult D."/>
            <person name="Audic S."/>
            <person name="Robert C."/>
            <person name="Abergel C."/>
            <person name="Renesto P."/>
            <person name="Ogata H."/>
            <person name="La Scola B."/>
            <person name="Susan M."/>
            <person name="Claverie J.-M."/>
        </authorList>
    </citation>
    <scope>NUCLEOTIDE SEQUENCE [LARGE SCALE GENOMIC DNA]</scope>
    <source>
        <strain>Rowbotham-Bradford</strain>
    </source>
</reference>
<proteinExistence type="predicted"/>
<protein>
    <recommendedName>
        <fullName>Putative ankyrin repeat protein R600</fullName>
    </recommendedName>
</protein>
<dbReference type="EMBL" id="AY653733">
    <property type="protein sequence ID" value="AAV50863.1"/>
    <property type="molecule type" value="Genomic_DNA"/>
</dbReference>
<dbReference type="SMR" id="Q5UP63"/>
<dbReference type="KEGG" id="vg:9925237"/>
<dbReference type="Proteomes" id="UP000001134">
    <property type="component" value="Genome"/>
</dbReference>
<dbReference type="Gene3D" id="1.25.40.20">
    <property type="entry name" value="Ankyrin repeat-containing domain"/>
    <property type="match status" value="1"/>
</dbReference>
<dbReference type="InterPro" id="IPR002110">
    <property type="entry name" value="Ankyrin_rpt"/>
</dbReference>
<dbReference type="InterPro" id="IPR036770">
    <property type="entry name" value="Ankyrin_rpt-contain_sf"/>
</dbReference>
<dbReference type="PANTHER" id="PTHR24126">
    <property type="entry name" value="ANKYRIN REPEAT, PH AND SEC7 DOMAIN CONTAINING PROTEIN SECG-RELATED"/>
    <property type="match status" value="1"/>
</dbReference>
<dbReference type="Pfam" id="PF12796">
    <property type="entry name" value="Ank_2"/>
    <property type="match status" value="2"/>
</dbReference>
<dbReference type="SMART" id="SM00248">
    <property type="entry name" value="ANK"/>
    <property type="match status" value="4"/>
</dbReference>
<dbReference type="SUPFAM" id="SSF48403">
    <property type="entry name" value="Ankyrin repeat"/>
    <property type="match status" value="1"/>
</dbReference>
<dbReference type="PROSITE" id="PS50297">
    <property type="entry name" value="ANK_REP_REGION"/>
    <property type="match status" value="1"/>
</dbReference>
<dbReference type="PROSITE" id="PS50088">
    <property type="entry name" value="ANK_REPEAT"/>
    <property type="match status" value="1"/>
</dbReference>
<keyword id="KW-0040">ANK repeat</keyword>
<keyword id="KW-1185">Reference proteome</keyword>
<keyword id="KW-0677">Repeat</keyword>
<accession>Q5UP63</accession>
<organism>
    <name type="scientific">Acanthamoeba polyphaga mimivirus</name>
    <name type="common">APMV</name>
    <dbReference type="NCBI Taxonomy" id="212035"/>
    <lineage>
        <taxon>Viruses</taxon>
        <taxon>Varidnaviria</taxon>
        <taxon>Bamfordvirae</taxon>
        <taxon>Nucleocytoviricota</taxon>
        <taxon>Megaviricetes</taxon>
        <taxon>Imitervirales</taxon>
        <taxon>Mimiviridae</taxon>
        <taxon>Megamimivirinae</taxon>
        <taxon>Mimivirus</taxon>
        <taxon>Mimivirus bradfordmassiliense</taxon>
    </lineage>
</organism>
<sequence length="315" mass="36262">MHRVRKTNYFYFDNTRLDLADEDFEYFKQLLIDNNIDELCQEMCNKNKVDCFISYLVVIDDLDNFILITDRTDTYIHSNECRYFRMAVYNNSYDIAKYLLENGANVHVCNSYAITCASGFGKFYVFHSEKKEKRDTVELVKLLIDYNAMVGTDTCNLVHTAIDANRLDVVKILVENGADIFSNQSKLLKSAVMYNYDILEYLISQGIDVTDDNNSVLKFAVSRGYDCVDLLLDAGADMNTLRREDVSKAILMKGSEIIETLNNNGYDFECLNGFSNTIIDTHTSKIINILNNRVSMTDVASILLYNSKYDDNYRK</sequence>
<name>YR600_MIMIV</name>
<gene>
    <name type="ordered locus">MIMI_R600</name>
</gene>
<feature type="chain" id="PRO_0000067179" description="Putative ankyrin repeat protein R600">
    <location>
        <begin position="1"/>
        <end position="315"/>
    </location>
</feature>
<feature type="repeat" description="ANK 1">
    <location>
        <begin position="79"/>
        <end position="108"/>
    </location>
</feature>
<feature type="repeat" description="ANK 2">
    <location>
        <begin position="118"/>
        <end position="152"/>
    </location>
</feature>
<feature type="repeat" description="ANK 3">
    <location>
        <begin position="153"/>
        <end position="182"/>
    </location>
</feature>
<feature type="repeat" description="ANK 4">
    <location>
        <begin position="184"/>
        <end position="211"/>
    </location>
</feature>
<feature type="repeat" description="ANK 5">
    <location>
        <begin position="212"/>
        <end position="240"/>
    </location>
</feature>
<organismHost>
    <name type="scientific">Acanthamoeba polyphaga</name>
    <name type="common">Amoeba</name>
    <dbReference type="NCBI Taxonomy" id="5757"/>
</organismHost>